<evidence type="ECO:0000250" key="1"/>
<evidence type="ECO:0000250" key="2">
    <source>
        <dbReference type="UniProtKB" id="P08310"/>
    </source>
</evidence>
<evidence type="ECO:0000305" key="3"/>
<accession>P95608</accession>
<protein>
    <recommendedName>
        <fullName>Muconate cycloisomerase 1</fullName>
        <ecNumber evidence="2">5.5.1.1</ecNumber>
    </recommendedName>
    <alternativeName>
        <fullName>Cis,cis-muconate lactonizing enzyme I</fullName>
        <shortName>MLE</shortName>
    </alternativeName>
    <alternativeName>
        <fullName>Muconate cycloisomerase I</fullName>
    </alternativeName>
</protein>
<sequence length="373" mass="39609">MTDLSIVSVETTILDVPLVRPHKFATTSMTAQPLLLVAVTTAGGVTGYGEGVVPGGPWWGGESVETMQAIVERYIVPVLLGRGVDEITGIMPDIERVVANARFAKAAVDVALHDAWARSLGVPVHTLLGGAFRKSVDVTWALGAAPAEEIIEEALDLVESKRHFSFKLKMGALDPAVDTARVVQIAQALQGKAGVRIDVNARWDRLTALKYVPRLVEGGVELIEQPTPGEQLEVLAELNRLVPVPVMADESVQTPHDALEVARRGAADVIALKTTKCGGLQKSREVVAIAKAAGIACHGATSIEGPIGTAASIHFACAEPGIDFGTELFGPLLFSEELLQEPIRYADGQVFLPEGPGLGVELNMDAVKTWTRN</sequence>
<proteinExistence type="evidence at protein level"/>
<comment type="catalytic activity">
    <reaction evidence="2">
        <text>(S)-muconolactone = cis,cis-muconate + H(+)</text>
        <dbReference type="Rhea" id="RHEA:30031"/>
        <dbReference type="ChEBI" id="CHEBI:15378"/>
        <dbReference type="ChEBI" id="CHEBI:32379"/>
        <dbReference type="ChEBI" id="CHEBI:58736"/>
        <dbReference type="EC" id="5.5.1.1"/>
    </reaction>
</comment>
<comment type="cofactor">
    <cofactor>
        <name>Mn(2+)</name>
        <dbReference type="ChEBI" id="CHEBI:29035"/>
    </cofactor>
</comment>
<comment type="similarity">
    <text evidence="3">Belongs to the mandelate racemase/muconate lactonizing enzyme family.</text>
</comment>
<organism>
    <name type="scientific">Rhodococcus opacus</name>
    <name type="common">Nocardia opaca</name>
    <dbReference type="NCBI Taxonomy" id="37919"/>
    <lineage>
        <taxon>Bacteria</taxon>
        <taxon>Bacillati</taxon>
        <taxon>Actinomycetota</taxon>
        <taxon>Actinomycetes</taxon>
        <taxon>Mycobacteriales</taxon>
        <taxon>Nocardiaceae</taxon>
        <taxon>Rhodococcus</taxon>
    </lineage>
</organism>
<feature type="chain" id="PRO_0000171252" description="Muconate cycloisomerase 1">
    <location>
        <begin position="1"/>
        <end position="373"/>
    </location>
</feature>
<feature type="active site" evidence="1">
    <location>
        <position position="169"/>
    </location>
</feature>
<feature type="active site" description="Proton acceptor" evidence="1">
    <location>
        <position position="169"/>
    </location>
</feature>
<feature type="active site" description="Proton donor" evidence="1">
    <location>
        <position position="327"/>
    </location>
</feature>
<feature type="binding site" evidence="1">
    <location>
        <position position="198"/>
    </location>
    <ligand>
        <name>Mn(2+)</name>
        <dbReference type="ChEBI" id="CHEBI:29035"/>
    </ligand>
</feature>
<feature type="binding site" evidence="1">
    <location>
        <position position="224"/>
    </location>
    <ligand>
        <name>Mn(2+)</name>
        <dbReference type="ChEBI" id="CHEBI:29035"/>
    </ligand>
</feature>
<feature type="binding site" evidence="1">
    <location>
        <position position="249"/>
    </location>
    <ligand>
        <name>Mn(2+)</name>
        <dbReference type="ChEBI" id="CHEBI:29035"/>
    </ligand>
</feature>
<dbReference type="EC" id="5.5.1.1" evidence="2"/>
<dbReference type="EMBL" id="X99622">
    <property type="protein sequence ID" value="CAA67934.1"/>
    <property type="molecule type" value="Genomic_DNA"/>
</dbReference>
<dbReference type="RefSeq" id="WP_065492182.1">
    <property type="nucleotide sequence ID" value="NZ_CP009111.1"/>
</dbReference>
<dbReference type="SMR" id="P95608"/>
<dbReference type="eggNOG" id="COG4948">
    <property type="taxonomic scope" value="Bacteria"/>
</dbReference>
<dbReference type="GO" id="GO:0018850">
    <property type="term" value="F:chloromuconate cycloisomerase activity"/>
    <property type="evidence" value="ECO:0007669"/>
    <property type="project" value="InterPro"/>
</dbReference>
<dbReference type="GO" id="GO:0030145">
    <property type="term" value="F:manganese ion binding"/>
    <property type="evidence" value="ECO:0007669"/>
    <property type="project" value="InterPro"/>
</dbReference>
<dbReference type="GO" id="GO:0018849">
    <property type="term" value="F:muconate cycloisomerase activity"/>
    <property type="evidence" value="ECO:0007669"/>
    <property type="project" value="UniProtKB-EC"/>
</dbReference>
<dbReference type="GO" id="GO:0009063">
    <property type="term" value="P:amino acid catabolic process"/>
    <property type="evidence" value="ECO:0007669"/>
    <property type="project" value="InterPro"/>
</dbReference>
<dbReference type="CDD" id="cd03318">
    <property type="entry name" value="MLE"/>
    <property type="match status" value="1"/>
</dbReference>
<dbReference type="Gene3D" id="3.20.20.120">
    <property type="entry name" value="Enolase-like C-terminal domain"/>
    <property type="match status" value="1"/>
</dbReference>
<dbReference type="Gene3D" id="3.30.390.10">
    <property type="entry name" value="Enolase-like, N-terminal domain"/>
    <property type="match status" value="1"/>
</dbReference>
<dbReference type="InterPro" id="IPR013370">
    <property type="entry name" value="Chloromuconate_cycloisomerase"/>
</dbReference>
<dbReference type="InterPro" id="IPR034593">
    <property type="entry name" value="DgoD-like"/>
</dbReference>
<dbReference type="InterPro" id="IPR036849">
    <property type="entry name" value="Enolase-like_C_sf"/>
</dbReference>
<dbReference type="InterPro" id="IPR029017">
    <property type="entry name" value="Enolase-like_N"/>
</dbReference>
<dbReference type="InterPro" id="IPR029065">
    <property type="entry name" value="Enolase_C-like"/>
</dbReference>
<dbReference type="InterPro" id="IPR018110">
    <property type="entry name" value="Mandel_Rmase/mucon_lact_enz_CS"/>
</dbReference>
<dbReference type="InterPro" id="IPR013342">
    <property type="entry name" value="Mandelate_racemase_C"/>
</dbReference>
<dbReference type="InterPro" id="IPR013341">
    <property type="entry name" value="Mandelate_racemase_N_dom"/>
</dbReference>
<dbReference type="NCBIfam" id="TIGR02534">
    <property type="entry name" value="mucon_cyclo"/>
    <property type="match status" value="1"/>
</dbReference>
<dbReference type="PANTHER" id="PTHR48080">
    <property type="entry name" value="D-GALACTONATE DEHYDRATASE-RELATED"/>
    <property type="match status" value="1"/>
</dbReference>
<dbReference type="PANTHER" id="PTHR48080:SF3">
    <property type="entry name" value="ENOLASE SUPERFAMILY MEMBER DDB_G0284701"/>
    <property type="match status" value="1"/>
</dbReference>
<dbReference type="Pfam" id="PF13378">
    <property type="entry name" value="MR_MLE_C"/>
    <property type="match status" value="1"/>
</dbReference>
<dbReference type="Pfam" id="PF02746">
    <property type="entry name" value="MR_MLE_N"/>
    <property type="match status" value="1"/>
</dbReference>
<dbReference type="SFLD" id="SFLDG01258">
    <property type="entry name" value="(chloro)muconate_cycloisomeras"/>
    <property type="match status" value="1"/>
</dbReference>
<dbReference type="SFLD" id="SFLDG00180">
    <property type="entry name" value="muconate_cycloisomerase"/>
    <property type="match status" value="1"/>
</dbReference>
<dbReference type="SMART" id="SM00922">
    <property type="entry name" value="MR_MLE"/>
    <property type="match status" value="1"/>
</dbReference>
<dbReference type="SUPFAM" id="SSF51604">
    <property type="entry name" value="Enolase C-terminal domain-like"/>
    <property type="match status" value="1"/>
</dbReference>
<dbReference type="SUPFAM" id="SSF54826">
    <property type="entry name" value="Enolase N-terminal domain-like"/>
    <property type="match status" value="1"/>
</dbReference>
<dbReference type="PROSITE" id="PS00908">
    <property type="entry name" value="MR_MLE_1"/>
    <property type="match status" value="1"/>
</dbReference>
<dbReference type="PROSITE" id="PS00909">
    <property type="entry name" value="MR_MLE_2"/>
    <property type="match status" value="1"/>
</dbReference>
<keyword id="KW-0058">Aromatic hydrocarbons catabolism</keyword>
<keyword id="KW-0903">Direct protein sequencing</keyword>
<keyword id="KW-0413">Isomerase</keyword>
<keyword id="KW-0464">Manganese</keyword>
<keyword id="KW-0479">Metal-binding</keyword>
<gene>
    <name type="primary">catB</name>
</gene>
<reference key="1">
    <citation type="journal article" date="1997" name="J. Bacteriol.">
        <title>Characterization of catechol catabolic genes from Rhodococcus erythropolis 1CP.</title>
        <authorList>
            <person name="Eulberg D."/>
            <person name="Golovleva L.A."/>
            <person name="Schloemann M."/>
        </authorList>
    </citation>
    <scope>NUCLEOTIDE SEQUENCE [GENOMIC DNA]</scope>
    <scope>PARTIAL PROTEIN SEQUENCE</scope>
    <source>
        <strain>1CP</strain>
    </source>
</reference>
<name>CATB_RHOOP</name>